<accession>A8LJT5</accession>
<proteinExistence type="inferred from homology"/>
<comment type="function">
    <text evidence="1">Catalyzes the hydrolysis of N-succinyl-L,L-diaminopimelic acid (SDAP), forming succinate and LL-2,6-diaminopimelate (DAP), an intermediate involved in the bacterial biosynthesis of lysine and meso-diaminopimelic acid, an essential component of bacterial cell walls.</text>
</comment>
<comment type="catalytic activity">
    <reaction evidence="1">
        <text>N-succinyl-(2S,6S)-2,6-diaminopimelate + H2O = (2S,6S)-2,6-diaminopimelate + succinate</text>
        <dbReference type="Rhea" id="RHEA:22608"/>
        <dbReference type="ChEBI" id="CHEBI:15377"/>
        <dbReference type="ChEBI" id="CHEBI:30031"/>
        <dbReference type="ChEBI" id="CHEBI:57609"/>
        <dbReference type="ChEBI" id="CHEBI:58087"/>
        <dbReference type="EC" id="3.5.1.18"/>
    </reaction>
</comment>
<comment type="cofactor">
    <cofactor evidence="1">
        <name>Zn(2+)</name>
        <dbReference type="ChEBI" id="CHEBI:29105"/>
    </cofactor>
    <cofactor evidence="1">
        <name>Co(2+)</name>
        <dbReference type="ChEBI" id="CHEBI:48828"/>
    </cofactor>
    <text evidence="1">Binds 2 Zn(2+) or Co(2+) ions per subunit.</text>
</comment>
<comment type="pathway">
    <text evidence="1">Amino-acid biosynthesis; L-lysine biosynthesis via DAP pathway; LL-2,6-diaminopimelate from (S)-tetrahydrodipicolinate (succinylase route): step 3/3.</text>
</comment>
<comment type="subunit">
    <text evidence="1">Homodimer.</text>
</comment>
<comment type="similarity">
    <text evidence="1">Belongs to the peptidase M20A family. DapE subfamily.</text>
</comment>
<sequence length="379" mass="40125">MTDPVALTADLIRCPSVTPEEGGALSLLEARLSAAGFACTRVDRNGIANLFARWGEKGHARSFGFNGHTDVVPVGARADWRFDPFGAQVEGDWMYGRGAVDMKSAVAAFAAAAMDFVADTPPDGAVILAITGDEEGDAKDGTVALLDWMAAQGEAMDVCLVGEPTCPDEMGEMMKIGRRGSMTFFFEALGVQGHSAYPHRAKNPLPALAKLVDRLAGLELDTGTDHFDPSTLAVTTFDTGNPANNVIPAACRATVNIRFNDAHSSESLTAMVRGIAAEVAAETGIEITDRVSVSGESFITPPGRLSDLVAAAVETETGRVPVLSTSGGTSDARFVQHHCPVVEFGLVGKSMHQVDERVAIAQIPQLKAIYTRILRDYFA</sequence>
<dbReference type="EC" id="3.5.1.18" evidence="1"/>
<dbReference type="EMBL" id="CP000830">
    <property type="protein sequence ID" value="ABV91761.1"/>
    <property type="molecule type" value="Genomic_DNA"/>
</dbReference>
<dbReference type="RefSeq" id="WP_012176694.1">
    <property type="nucleotide sequence ID" value="NC_009952.1"/>
</dbReference>
<dbReference type="SMR" id="A8LJT5"/>
<dbReference type="STRING" id="398580.Dshi_0012"/>
<dbReference type="KEGG" id="dsh:Dshi_0012"/>
<dbReference type="eggNOG" id="COG0624">
    <property type="taxonomic scope" value="Bacteria"/>
</dbReference>
<dbReference type="HOGENOM" id="CLU_021802_4_0_5"/>
<dbReference type="OrthoDB" id="9809784at2"/>
<dbReference type="UniPathway" id="UPA00034">
    <property type="reaction ID" value="UER00021"/>
</dbReference>
<dbReference type="Proteomes" id="UP000006833">
    <property type="component" value="Chromosome"/>
</dbReference>
<dbReference type="GO" id="GO:0008777">
    <property type="term" value="F:acetylornithine deacetylase activity"/>
    <property type="evidence" value="ECO:0007669"/>
    <property type="project" value="TreeGrafter"/>
</dbReference>
<dbReference type="GO" id="GO:0050897">
    <property type="term" value="F:cobalt ion binding"/>
    <property type="evidence" value="ECO:0007669"/>
    <property type="project" value="UniProtKB-UniRule"/>
</dbReference>
<dbReference type="GO" id="GO:0009014">
    <property type="term" value="F:succinyl-diaminopimelate desuccinylase activity"/>
    <property type="evidence" value="ECO:0007669"/>
    <property type="project" value="UniProtKB-UniRule"/>
</dbReference>
<dbReference type="GO" id="GO:0008270">
    <property type="term" value="F:zinc ion binding"/>
    <property type="evidence" value="ECO:0007669"/>
    <property type="project" value="UniProtKB-UniRule"/>
</dbReference>
<dbReference type="GO" id="GO:0019877">
    <property type="term" value="P:diaminopimelate biosynthetic process"/>
    <property type="evidence" value="ECO:0007669"/>
    <property type="project" value="UniProtKB-UniRule"/>
</dbReference>
<dbReference type="GO" id="GO:0006526">
    <property type="term" value="P:L-arginine biosynthetic process"/>
    <property type="evidence" value="ECO:0007669"/>
    <property type="project" value="TreeGrafter"/>
</dbReference>
<dbReference type="GO" id="GO:0009089">
    <property type="term" value="P:lysine biosynthetic process via diaminopimelate"/>
    <property type="evidence" value="ECO:0007669"/>
    <property type="project" value="UniProtKB-UniRule"/>
</dbReference>
<dbReference type="CDD" id="cd03891">
    <property type="entry name" value="M20_DapE_proteobac"/>
    <property type="match status" value="1"/>
</dbReference>
<dbReference type="Gene3D" id="3.30.70.360">
    <property type="match status" value="1"/>
</dbReference>
<dbReference type="Gene3D" id="3.40.630.10">
    <property type="entry name" value="Zn peptidases"/>
    <property type="match status" value="1"/>
</dbReference>
<dbReference type="HAMAP" id="MF_01690">
    <property type="entry name" value="DapE"/>
    <property type="match status" value="1"/>
</dbReference>
<dbReference type="InterPro" id="IPR001261">
    <property type="entry name" value="ArgE/DapE_CS"/>
</dbReference>
<dbReference type="InterPro" id="IPR036264">
    <property type="entry name" value="Bact_exopeptidase_dim_dom"/>
</dbReference>
<dbReference type="InterPro" id="IPR005941">
    <property type="entry name" value="DapE_proteobac"/>
</dbReference>
<dbReference type="InterPro" id="IPR002933">
    <property type="entry name" value="Peptidase_M20"/>
</dbReference>
<dbReference type="InterPro" id="IPR011650">
    <property type="entry name" value="Peptidase_M20_dimer"/>
</dbReference>
<dbReference type="InterPro" id="IPR050072">
    <property type="entry name" value="Peptidase_M20A"/>
</dbReference>
<dbReference type="NCBIfam" id="TIGR01246">
    <property type="entry name" value="dapE_proteo"/>
    <property type="match status" value="1"/>
</dbReference>
<dbReference type="NCBIfam" id="NF009557">
    <property type="entry name" value="PRK13009.1"/>
    <property type="match status" value="1"/>
</dbReference>
<dbReference type="PANTHER" id="PTHR43808">
    <property type="entry name" value="ACETYLORNITHINE DEACETYLASE"/>
    <property type="match status" value="1"/>
</dbReference>
<dbReference type="PANTHER" id="PTHR43808:SF31">
    <property type="entry name" value="N-ACETYL-L-CITRULLINE DEACETYLASE"/>
    <property type="match status" value="1"/>
</dbReference>
<dbReference type="Pfam" id="PF07687">
    <property type="entry name" value="M20_dimer"/>
    <property type="match status" value="1"/>
</dbReference>
<dbReference type="Pfam" id="PF01546">
    <property type="entry name" value="Peptidase_M20"/>
    <property type="match status" value="1"/>
</dbReference>
<dbReference type="SUPFAM" id="SSF55031">
    <property type="entry name" value="Bacterial exopeptidase dimerisation domain"/>
    <property type="match status" value="1"/>
</dbReference>
<dbReference type="SUPFAM" id="SSF53187">
    <property type="entry name" value="Zn-dependent exopeptidases"/>
    <property type="match status" value="1"/>
</dbReference>
<dbReference type="PROSITE" id="PS00759">
    <property type="entry name" value="ARGE_DAPE_CPG2_2"/>
    <property type="match status" value="1"/>
</dbReference>
<gene>
    <name evidence="1" type="primary">dapE</name>
    <name type="ordered locus">Dshi_0012</name>
</gene>
<protein>
    <recommendedName>
        <fullName evidence="1">Succinyl-diaminopimelate desuccinylase</fullName>
        <shortName evidence="1">SDAP desuccinylase</shortName>
        <ecNumber evidence="1">3.5.1.18</ecNumber>
    </recommendedName>
    <alternativeName>
        <fullName evidence="1">N-succinyl-LL-2,6-diaminoheptanedioate amidohydrolase</fullName>
    </alternativeName>
</protein>
<name>DAPE_DINSH</name>
<keyword id="KW-0028">Amino-acid biosynthesis</keyword>
<keyword id="KW-0170">Cobalt</keyword>
<keyword id="KW-0220">Diaminopimelate biosynthesis</keyword>
<keyword id="KW-0378">Hydrolase</keyword>
<keyword id="KW-0457">Lysine biosynthesis</keyword>
<keyword id="KW-0479">Metal-binding</keyword>
<keyword id="KW-1185">Reference proteome</keyword>
<keyword id="KW-0862">Zinc</keyword>
<feature type="chain" id="PRO_0000375543" description="Succinyl-diaminopimelate desuccinylase">
    <location>
        <begin position="1"/>
        <end position="379"/>
    </location>
</feature>
<feature type="active site" evidence="1">
    <location>
        <position position="70"/>
    </location>
</feature>
<feature type="active site" description="Proton acceptor" evidence="1">
    <location>
        <position position="134"/>
    </location>
</feature>
<feature type="binding site" evidence="1">
    <location>
        <position position="68"/>
    </location>
    <ligand>
        <name>Zn(2+)</name>
        <dbReference type="ChEBI" id="CHEBI:29105"/>
        <label>1</label>
    </ligand>
</feature>
<feature type="binding site" evidence="1">
    <location>
        <position position="101"/>
    </location>
    <ligand>
        <name>Zn(2+)</name>
        <dbReference type="ChEBI" id="CHEBI:29105"/>
        <label>1</label>
    </ligand>
</feature>
<feature type="binding site" evidence="1">
    <location>
        <position position="101"/>
    </location>
    <ligand>
        <name>Zn(2+)</name>
        <dbReference type="ChEBI" id="CHEBI:29105"/>
        <label>2</label>
    </ligand>
</feature>
<feature type="binding site" evidence="1">
    <location>
        <position position="135"/>
    </location>
    <ligand>
        <name>Zn(2+)</name>
        <dbReference type="ChEBI" id="CHEBI:29105"/>
        <label>2</label>
    </ligand>
</feature>
<feature type="binding site" evidence="1">
    <location>
        <position position="163"/>
    </location>
    <ligand>
        <name>Zn(2+)</name>
        <dbReference type="ChEBI" id="CHEBI:29105"/>
        <label>1</label>
    </ligand>
</feature>
<feature type="binding site" evidence="1">
    <location>
        <position position="352"/>
    </location>
    <ligand>
        <name>Zn(2+)</name>
        <dbReference type="ChEBI" id="CHEBI:29105"/>
        <label>2</label>
    </ligand>
</feature>
<evidence type="ECO:0000255" key="1">
    <source>
        <dbReference type="HAMAP-Rule" id="MF_01690"/>
    </source>
</evidence>
<organism>
    <name type="scientific">Dinoroseobacter shibae (strain DSM 16493 / NCIMB 14021 / DFL 12)</name>
    <dbReference type="NCBI Taxonomy" id="398580"/>
    <lineage>
        <taxon>Bacteria</taxon>
        <taxon>Pseudomonadati</taxon>
        <taxon>Pseudomonadota</taxon>
        <taxon>Alphaproteobacteria</taxon>
        <taxon>Rhodobacterales</taxon>
        <taxon>Roseobacteraceae</taxon>
        <taxon>Dinoroseobacter</taxon>
    </lineage>
</organism>
<reference key="1">
    <citation type="journal article" date="2010" name="ISME J.">
        <title>The complete genome sequence of the algal symbiont Dinoroseobacter shibae: a hitchhiker's guide to life in the sea.</title>
        <authorList>
            <person name="Wagner-Dobler I."/>
            <person name="Ballhausen B."/>
            <person name="Berger M."/>
            <person name="Brinkhoff T."/>
            <person name="Buchholz I."/>
            <person name="Bunk B."/>
            <person name="Cypionka H."/>
            <person name="Daniel R."/>
            <person name="Drepper T."/>
            <person name="Gerdts G."/>
            <person name="Hahnke S."/>
            <person name="Han C."/>
            <person name="Jahn D."/>
            <person name="Kalhoefer D."/>
            <person name="Kiss H."/>
            <person name="Klenk H.P."/>
            <person name="Kyrpides N."/>
            <person name="Liebl W."/>
            <person name="Liesegang H."/>
            <person name="Meincke L."/>
            <person name="Pati A."/>
            <person name="Petersen J."/>
            <person name="Piekarski T."/>
            <person name="Pommerenke C."/>
            <person name="Pradella S."/>
            <person name="Pukall R."/>
            <person name="Rabus R."/>
            <person name="Stackebrandt E."/>
            <person name="Thole S."/>
            <person name="Thompson L."/>
            <person name="Tielen P."/>
            <person name="Tomasch J."/>
            <person name="von Jan M."/>
            <person name="Wanphrut N."/>
            <person name="Wichels A."/>
            <person name="Zech H."/>
            <person name="Simon M."/>
        </authorList>
    </citation>
    <scope>NUCLEOTIDE SEQUENCE [LARGE SCALE GENOMIC DNA]</scope>
    <source>
        <strain>DSM 16493 / NCIMB 14021 / DFL 12</strain>
    </source>
</reference>